<protein>
    <recommendedName>
        <fullName>Probable HTH-type transcriptional regulator LgoR</fullName>
    </recommendedName>
</protein>
<evidence type="ECO:0000250" key="1"/>
<evidence type="ECO:0000269" key="2">
    <source>
    </source>
</evidence>
<evidence type="ECO:0000305" key="3"/>
<reference key="1">
    <citation type="journal article" date="1995" name="Nucleic Acids Res.">
        <title>Analysis of the Escherichia coli genome VI: DNA sequence of the region from 92.8 through 100 minutes.</title>
        <authorList>
            <person name="Burland V.D."/>
            <person name="Plunkett G. III"/>
            <person name="Sofia H.J."/>
            <person name="Daniels D.L."/>
            <person name="Blattner F.R."/>
        </authorList>
    </citation>
    <scope>NUCLEOTIDE SEQUENCE [LARGE SCALE GENOMIC DNA]</scope>
    <source>
        <strain>K12 / MG1655 / ATCC 47076</strain>
    </source>
</reference>
<reference key="2">
    <citation type="journal article" date="1997" name="Science">
        <title>The complete genome sequence of Escherichia coli K-12.</title>
        <authorList>
            <person name="Blattner F.R."/>
            <person name="Plunkett G. III"/>
            <person name="Bloch C.A."/>
            <person name="Perna N.T."/>
            <person name="Burland V."/>
            <person name="Riley M."/>
            <person name="Collado-Vides J."/>
            <person name="Glasner J.D."/>
            <person name="Rode C.K."/>
            <person name="Mayhew G.F."/>
            <person name="Gregor J."/>
            <person name="Davis N.W."/>
            <person name="Kirkpatrick H.A."/>
            <person name="Goeden M.A."/>
            <person name="Rose D.J."/>
            <person name="Mau B."/>
            <person name="Shao Y."/>
        </authorList>
    </citation>
    <scope>NUCLEOTIDE SEQUENCE [LARGE SCALE GENOMIC DNA]</scope>
    <source>
        <strain>K12 / MG1655 / ATCC 47076</strain>
    </source>
</reference>
<reference key="3">
    <citation type="journal article" date="2006" name="Nucleic Acids Res.">
        <title>Escherichia coli K-12: a cooperatively developed annotation snapshot -- 2005.</title>
        <authorList>
            <person name="Riley M."/>
            <person name="Abe T."/>
            <person name="Arnaud M.B."/>
            <person name="Berlyn M.K.B."/>
            <person name="Blattner F.R."/>
            <person name="Chaudhuri R.R."/>
            <person name="Glasner J.D."/>
            <person name="Horiuchi T."/>
            <person name="Keseler I.M."/>
            <person name="Kosuge T."/>
            <person name="Mori H."/>
            <person name="Perna N.T."/>
            <person name="Plunkett G. III"/>
            <person name="Rudd K.E."/>
            <person name="Serres M.H."/>
            <person name="Thomas G.H."/>
            <person name="Thomson N.R."/>
            <person name="Wishart D."/>
            <person name="Wanner B.L."/>
        </authorList>
    </citation>
    <scope>SEQUENCE REVISION</scope>
</reference>
<reference key="4">
    <citation type="journal article" date="2006" name="Mol. Syst. Biol.">
        <title>Highly accurate genome sequences of Escherichia coli K-12 strains MG1655 and W3110.</title>
        <authorList>
            <person name="Hayashi K."/>
            <person name="Morooka N."/>
            <person name="Yamamoto Y."/>
            <person name="Fujita K."/>
            <person name="Isono K."/>
            <person name="Choi S."/>
            <person name="Ohtsubo E."/>
            <person name="Baba T."/>
            <person name="Wanner B.L."/>
            <person name="Mori H."/>
            <person name="Horiuchi T."/>
        </authorList>
    </citation>
    <scope>NUCLEOTIDE SEQUENCE [LARGE SCALE GENOMIC DNA]</scope>
    <source>
        <strain>K12 / W3110 / ATCC 27325 / DSM 5911</strain>
    </source>
</reference>
<reference key="5">
    <citation type="journal article" date="2006" name="Proc. Natl. Acad. Sci. U.S.A.">
        <title>Systems approach to refining genome annotation.</title>
        <authorList>
            <person name="Reed J.L."/>
            <person name="Patel T.R."/>
            <person name="Chen K.H."/>
            <person name="Joyce A.R."/>
            <person name="Applebee M.K."/>
            <person name="Herring C.D."/>
            <person name="Bui O.T."/>
            <person name="Knight E.M."/>
            <person name="Fong S.S."/>
            <person name="Palsson B.O."/>
        </authorList>
    </citation>
    <scope>FUNCTION</scope>
    <scope>ROLE IN L-GALACTONATE UTILIZATION</scope>
    <scope>DISRUPTION PHENOTYPE</scope>
    <scope>INDUCTION</scope>
</reference>
<accession>P39399</accession>
<accession>Q2M5V9</accession>
<accession>Q6BEW6</accession>
<proteinExistence type="evidence at transcript level"/>
<name>LGOR_ECOLI</name>
<dbReference type="EMBL" id="U14003">
    <property type="protein sequence ID" value="AAA97255.1"/>
    <property type="status" value="ALT_FRAME"/>
    <property type="molecule type" value="Genomic_DNA"/>
</dbReference>
<dbReference type="EMBL" id="U00096">
    <property type="protein sequence ID" value="AAT48248.1"/>
    <property type="molecule type" value="Genomic_DNA"/>
</dbReference>
<dbReference type="EMBL" id="AP009048">
    <property type="protein sequence ID" value="BAE78347.1"/>
    <property type="molecule type" value="Genomic_DNA"/>
</dbReference>
<dbReference type="PIR" id="S56584">
    <property type="entry name" value="S56584"/>
</dbReference>
<dbReference type="RefSeq" id="WP_000091570.1">
    <property type="nucleotide sequence ID" value="NZ_LN832404.1"/>
</dbReference>
<dbReference type="RefSeq" id="YP_026290.1">
    <property type="nucleotide sequence ID" value="NC_000913.3"/>
</dbReference>
<dbReference type="SMR" id="P39399"/>
<dbReference type="BioGRID" id="4261391">
    <property type="interactions" value="217"/>
</dbReference>
<dbReference type="FunCoup" id="P39399">
    <property type="interactions" value="7"/>
</dbReference>
<dbReference type="STRING" id="511145.b4357"/>
<dbReference type="PaxDb" id="511145-b4357"/>
<dbReference type="EnsemblBacteria" id="AAT48248">
    <property type="protein sequence ID" value="AAT48248"/>
    <property type="gene ID" value="b4357"/>
</dbReference>
<dbReference type="GeneID" id="948881"/>
<dbReference type="KEGG" id="ecj:JW5792"/>
<dbReference type="KEGG" id="eco:b4357"/>
<dbReference type="KEGG" id="ecoc:C3026_23540"/>
<dbReference type="PATRIC" id="fig|1411691.4.peg.2329"/>
<dbReference type="EchoBASE" id="EB2474"/>
<dbReference type="eggNOG" id="COG1802">
    <property type="taxonomic scope" value="Bacteria"/>
</dbReference>
<dbReference type="HOGENOM" id="CLU_082415_0_0_6"/>
<dbReference type="InParanoid" id="P39399"/>
<dbReference type="OMA" id="EMFELHS"/>
<dbReference type="OrthoDB" id="9799812at2"/>
<dbReference type="PhylomeDB" id="P39399"/>
<dbReference type="BioCyc" id="EcoCyc:G7944-MONOMER"/>
<dbReference type="PRO" id="PR:P39399"/>
<dbReference type="Proteomes" id="UP000000625">
    <property type="component" value="Chromosome"/>
</dbReference>
<dbReference type="GO" id="GO:0003677">
    <property type="term" value="F:DNA binding"/>
    <property type="evidence" value="ECO:0007669"/>
    <property type="project" value="UniProtKB-KW"/>
</dbReference>
<dbReference type="GO" id="GO:0003700">
    <property type="term" value="F:DNA-binding transcription factor activity"/>
    <property type="evidence" value="ECO:0007669"/>
    <property type="project" value="InterPro"/>
</dbReference>
<dbReference type="GO" id="GO:0019584">
    <property type="term" value="P:galactonate catabolic process"/>
    <property type="evidence" value="ECO:0000315"/>
    <property type="project" value="EcoCyc"/>
</dbReference>
<dbReference type="GO" id="GO:0006355">
    <property type="term" value="P:regulation of DNA-templated transcription"/>
    <property type="evidence" value="ECO:0000250"/>
    <property type="project" value="EcoCyc"/>
</dbReference>
<dbReference type="FunFam" id="1.10.10.10:FF:000283">
    <property type="entry name" value="GntR family transcriptional regulator"/>
    <property type="match status" value="1"/>
</dbReference>
<dbReference type="Gene3D" id="1.20.120.530">
    <property type="entry name" value="GntR ligand-binding domain-like"/>
    <property type="match status" value="1"/>
</dbReference>
<dbReference type="Gene3D" id="1.10.10.10">
    <property type="entry name" value="Winged helix-like DNA-binding domain superfamily/Winged helix DNA-binding domain"/>
    <property type="match status" value="2"/>
</dbReference>
<dbReference type="InterPro" id="IPR011711">
    <property type="entry name" value="GntR_C"/>
</dbReference>
<dbReference type="InterPro" id="IPR008920">
    <property type="entry name" value="TF_FadR/GntR_C"/>
</dbReference>
<dbReference type="InterPro" id="IPR000524">
    <property type="entry name" value="Tscrpt_reg_HTH_GntR"/>
</dbReference>
<dbReference type="InterPro" id="IPR036388">
    <property type="entry name" value="WH-like_DNA-bd_sf"/>
</dbReference>
<dbReference type="InterPro" id="IPR036390">
    <property type="entry name" value="WH_DNA-bd_sf"/>
</dbReference>
<dbReference type="PANTHER" id="PTHR43537:SF51">
    <property type="entry name" value="HTH-TYPE TRANSCRIPTIONAL REGULATOR LGOR-RELATED"/>
    <property type="match status" value="1"/>
</dbReference>
<dbReference type="PANTHER" id="PTHR43537">
    <property type="entry name" value="TRANSCRIPTIONAL REGULATOR, GNTR FAMILY"/>
    <property type="match status" value="1"/>
</dbReference>
<dbReference type="Pfam" id="PF07729">
    <property type="entry name" value="FCD"/>
    <property type="match status" value="1"/>
</dbReference>
<dbReference type="PRINTS" id="PR00035">
    <property type="entry name" value="HTHGNTR"/>
</dbReference>
<dbReference type="SMART" id="SM00895">
    <property type="entry name" value="FCD"/>
    <property type="match status" value="1"/>
</dbReference>
<dbReference type="SUPFAM" id="SSF48008">
    <property type="entry name" value="GntR ligand-binding domain-like"/>
    <property type="match status" value="1"/>
</dbReference>
<dbReference type="SUPFAM" id="SSF46785">
    <property type="entry name" value="Winged helix' DNA-binding domain"/>
    <property type="match status" value="2"/>
</dbReference>
<sequence>MSRSQNLRHNVINQVIDDMARGHIPSPLPSQSALAEMYNISRTTVRHILSHLRECGVLTQVGNDYVIARKPDHDDGFACTTASMSEQNKVFEQAFFTMINQRQLRPGETFSELQLARAAGVSPVVVREYLLKFGRYNLIHSEKRGQWSMKQFDQSYAEQLFELREMLETHSLQHFLNLPDHDPRWLQAKTMLERHRLLRDNIGNSFRMFSQLDRDFHSLLLSAADNIFFDQSLEIISVIFHFHYQWDESDLKQRNIIAVDEHMTILSALICRSDLDATLALRNHLNSAKQSMIRSINENTRYAH</sequence>
<organism>
    <name type="scientific">Escherichia coli (strain K12)</name>
    <dbReference type="NCBI Taxonomy" id="83333"/>
    <lineage>
        <taxon>Bacteria</taxon>
        <taxon>Pseudomonadati</taxon>
        <taxon>Pseudomonadota</taxon>
        <taxon>Gammaproteobacteria</taxon>
        <taxon>Enterobacterales</taxon>
        <taxon>Enterobacteriaceae</taxon>
        <taxon>Escherichia</taxon>
    </lineage>
</organism>
<comment type="function">
    <text evidence="2">May be a positive transcriptional regulator for lgoD and/or lgoT. Is essential for growth on L-galactonate as the sole carbon source.</text>
</comment>
<comment type="induction">
    <text evidence="2">Highly up-regulated during growth on L-galactonate.</text>
</comment>
<comment type="disruption phenotype">
    <text evidence="2">Cells lacking this gene fail to grow on L-galactonate as sole carbon source.</text>
</comment>
<comment type="sequence caution" evidence="3">
    <conflict type="frameshift">
        <sequence resource="EMBL-CDS" id="AAA97255"/>
    </conflict>
</comment>
<feature type="chain" id="PRO_0000169810" description="Probable HTH-type transcriptional regulator LgoR">
    <location>
        <begin position="1"/>
        <end position="304"/>
    </location>
</feature>
<feature type="domain" description="HTH gntR-type">
    <location>
        <begin position="1"/>
        <end position="70"/>
    </location>
</feature>
<feature type="DNA-binding region" description="H-T-H motif" evidence="1">
    <location>
        <begin position="31"/>
        <end position="50"/>
    </location>
</feature>
<feature type="sequence conflict" description="In Ref. 1; AAA97255." evidence="3" ref="1">
    <original>G</original>
    <variation>A</variation>
    <location>
        <position position="56"/>
    </location>
</feature>
<keyword id="KW-0010">Activator</keyword>
<keyword id="KW-0238">DNA-binding</keyword>
<keyword id="KW-1185">Reference proteome</keyword>
<keyword id="KW-0804">Transcription</keyword>
<keyword id="KW-0805">Transcription regulation</keyword>
<gene>
    <name type="primary">lgoR</name>
    <name type="synonym">yjjM</name>
    <name type="ordered locus">b4357</name>
    <name type="ordered locus">JW5792</name>
</gene>